<proteinExistence type="evidence at transcript level"/>
<keyword id="KW-1003">Cell membrane</keyword>
<keyword id="KW-0272">Extracellular matrix</keyword>
<keyword id="KW-0325">Glycoprotein</keyword>
<keyword id="KW-0336">GPI-anchor</keyword>
<keyword id="KW-1009">Hearing</keyword>
<keyword id="KW-0449">Lipoprotein</keyword>
<keyword id="KW-0472">Membrane</keyword>
<keyword id="KW-1185">Reference proteome</keyword>
<keyword id="KW-0964">Secreted</keyword>
<keyword id="KW-0732">Signal</keyword>
<gene>
    <name type="primary">Otoa</name>
</gene>
<feature type="signal peptide" evidence="1">
    <location>
        <begin position="1"/>
        <end position="23"/>
    </location>
</feature>
<feature type="chain" id="PRO_0000021973" description="Otoancorin">
    <location>
        <begin position="24"/>
        <end position="1113"/>
    </location>
</feature>
<feature type="propeptide" id="PRO_0000021974" description="Removed in mature form" evidence="1">
    <location>
        <begin position="1114"/>
        <end position="1137"/>
    </location>
</feature>
<feature type="region of interest" description="Disordered" evidence="2">
    <location>
        <begin position="1095"/>
        <end position="1119"/>
    </location>
</feature>
<feature type="compositionally biased region" description="Polar residues" evidence="2">
    <location>
        <begin position="1095"/>
        <end position="1115"/>
    </location>
</feature>
<feature type="lipid moiety-binding region" description="GPI-anchor amidated glycine" evidence="1">
    <location>
        <position position="1113"/>
    </location>
</feature>
<feature type="glycosylation site" description="N-linked (GlcNAc...) asparagine" evidence="1">
    <location>
        <position position="156"/>
    </location>
</feature>
<feature type="glycosylation site" description="N-linked (GlcNAc...) asparagine" evidence="1">
    <location>
        <position position="211"/>
    </location>
</feature>
<feature type="glycosylation site" description="N-linked (GlcNAc...) asparagine" evidence="1">
    <location>
        <position position="244"/>
    </location>
</feature>
<feature type="glycosylation site" description="N-linked (GlcNAc...) asparagine" evidence="1">
    <location>
        <position position="289"/>
    </location>
</feature>
<feature type="glycosylation site" description="N-linked (GlcNAc...) asparagine" evidence="1">
    <location>
        <position position="321"/>
    </location>
</feature>
<feature type="glycosylation site" description="N-linked (GlcNAc...) asparagine" evidence="1">
    <location>
        <position position="380"/>
    </location>
</feature>
<feature type="glycosylation site" description="N-linked (GlcNAc...) asparagine" evidence="1">
    <location>
        <position position="384"/>
    </location>
</feature>
<feature type="glycosylation site" description="N-linked (GlcNAc...) asparagine" evidence="1">
    <location>
        <position position="530"/>
    </location>
</feature>
<feature type="glycosylation site" description="N-linked (GlcNAc...) asparagine" evidence="1">
    <location>
        <position position="594"/>
    </location>
</feature>
<feature type="glycosylation site" description="N-linked (GlcNAc...) asparagine" evidence="1">
    <location>
        <position position="740"/>
    </location>
</feature>
<feature type="glycosylation site" description="N-linked (GlcNAc...) asparagine" evidence="1">
    <location>
        <position position="798"/>
    </location>
</feature>
<sequence>MSQGPRTCSLLLVLLLSHGGAYQREPSPRQDLHPLLQKMAEEIIEGSYLNALLDLTLFERSHVWTADLSHRVLAYLNSKNVAFTIPSLQAVMEAHLEQYLYQPQKLLEDLRATDNQQFHTAMKCLLEDKWGHLDLEDVVINLGDIRDEALQSPGVNRSLFLITLERCFQVLNALECVEVLGRVLRGSSGSFLQPDITERLPQDLHEDAFKNLSAVFKDLYDQTSAHTQRALYSWMTGILRTPFNVTDGSVSWVSAEKLWILGRYMVHLSFEEIMNISPIEIGLFISYDNATKQLDMVYDITPELAQAFLERIRCSSFDVRNISTIHRLGLLVCFYDGLELLDATLAQVLLHQMLKCSRLRGFQAGVQKLKANLLDIATENQTLNETLGSLSDAVVGLTSSQLESLSSDAVHSAISTLNQVTGWGRSQIVILSAKYLAQEKVLSFYNVCQMGVLLAGVGTQAFYSMDHKDLWQVLRSPLSQDMSDLSPVQQQGVLGKLMEAEDATSGIAEVPRALFKEVSLYDLWKESRFNATVLKAKELRRSQALFLYEFLGKTTERPEELLSAGQLVKGVPCSHIDAMSDHLFLALFQYFDNNFSLLSPDQVNCLAWKYWEVSRSSMPPFLLATLPSRFLSSIPPSRCVRFLISLGKRRLETLVLDSDKRSVVVRKVQQCLDGVIADEYTVDIVGHLLCHLPASFIERGISPRAWAAALHGLRSCTALSSEQKAAVRVRLLEQWGPPENWTAETTKDLAPFLAFFSGDELHTVATKFPEILQQTASKMVGVLLPKEFLWAVFESVQNSSNESPSFDPTFGCHGVVTPSSDDIFKLAEANACWDPEVLLCMEEDTFIRNVELLGAVKGFSRAQLMALKEKAIQVWDLPSRWKEHHIVSLGRIALALSESELEQLDLSSIDTVASLGQQTEWTPGQAKSILQAFLEDSGYGIQDLKSFHLVGFGPTLCAMDPTEIQLIKTSEFRAVVARIGTLFCSTPVLAGFKKKAEVVFGRPTEWTSSILQELGTIAAGITKAELRMLNKELMTYFQPSAIRCLPGEVFKELSTEQIASLGPQNAASVTHSQRLQLSSAQLQSLQRALDGAKTHSWQTDPLSSSPTWPASTGSPTGEPASQALWLGCTLLLLTAKS</sequence>
<name>OTOAN_MOUSE</name>
<comment type="function">
    <text evidence="3">May act as an adhesion molecule.</text>
</comment>
<comment type="subcellular location">
    <subcellularLocation>
        <location evidence="5">Apical cell membrane</location>
        <topology evidence="5">Lipid-anchor</topology>
        <topology evidence="5">GPI-anchor</topology>
        <orientation evidence="5">Extracellular side</orientation>
    </subcellularLocation>
    <subcellularLocation>
        <location evidence="5">Secreted</location>
        <location evidence="5">Extracellular space</location>
        <location evidence="5">Extracellular matrix</location>
    </subcellularLocation>
    <text>At the interface between the apical surface of the epithelia and the overlying acellular gel of the tectorial and otoconial membranes.</text>
</comment>
<comment type="tissue specificity">
    <text evidence="3">Expressed in the inner ear and vestibule.</text>
</comment>
<comment type="developmental stage">
    <text>Expressed in cochlea on the upper surface of the spiral limbus at 16.5 dpc onwards.</text>
</comment>
<comment type="similarity">
    <text evidence="4">Belongs to the stereocilin family.</text>
</comment>
<evidence type="ECO:0000255" key="1"/>
<evidence type="ECO:0000256" key="2">
    <source>
        <dbReference type="SAM" id="MobiDB-lite"/>
    </source>
</evidence>
<evidence type="ECO:0000269" key="3">
    <source>
    </source>
</evidence>
<evidence type="ECO:0000305" key="4"/>
<evidence type="ECO:0000305" key="5">
    <source>
    </source>
</evidence>
<organism>
    <name type="scientific">Mus musculus</name>
    <name type="common">Mouse</name>
    <dbReference type="NCBI Taxonomy" id="10090"/>
    <lineage>
        <taxon>Eukaryota</taxon>
        <taxon>Metazoa</taxon>
        <taxon>Chordata</taxon>
        <taxon>Craniata</taxon>
        <taxon>Vertebrata</taxon>
        <taxon>Euteleostomi</taxon>
        <taxon>Mammalia</taxon>
        <taxon>Eutheria</taxon>
        <taxon>Euarchontoglires</taxon>
        <taxon>Glires</taxon>
        <taxon>Rodentia</taxon>
        <taxon>Myomorpha</taxon>
        <taxon>Muroidea</taxon>
        <taxon>Muridae</taxon>
        <taxon>Murinae</taxon>
        <taxon>Mus</taxon>
        <taxon>Mus</taxon>
    </lineage>
</organism>
<dbReference type="EMBL" id="AY055122">
    <property type="protein sequence ID" value="AAL27794.1"/>
    <property type="molecule type" value="mRNA"/>
</dbReference>
<dbReference type="CCDS" id="CCDS40114.1"/>
<dbReference type="RefSeq" id="NP_647471.1">
    <property type="nucleotide sequence ID" value="NM_139310.2"/>
</dbReference>
<dbReference type="RefSeq" id="XP_017177756.1">
    <property type="nucleotide sequence ID" value="XM_017322267.3"/>
</dbReference>
<dbReference type="SMR" id="Q8K561"/>
<dbReference type="FunCoup" id="Q8K561">
    <property type="interactions" value="29"/>
</dbReference>
<dbReference type="IntAct" id="Q8K561">
    <property type="interactions" value="1"/>
</dbReference>
<dbReference type="STRING" id="10090.ENSMUSP00000044177"/>
<dbReference type="GlyCosmos" id="Q8K561">
    <property type="glycosylation" value="11 sites, No reported glycans"/>
</dbReference>
<dbReference type="GlyGen" id="Q8K561">
    <property type="glycosylation" value="11 sites, 3 N-linked glycans (3 sites)"/>
</dbReference>
<dbReference type="iPTMnet" id="Q8K561"/>
<dbReference type="PhosphoSitePlus" id="Q8K561"/>
<dbReference type="PaxDb" id="10090-ENSMUSP00000044177"/>
<dbReference type="ProteomicsDB" id="294350"/>
<dbReference type="Antibodypedia" id="50672">
    <property type="antibodies" value="79 antibodies from 19 providers"/>
</dbReference>
<dbReference type="DNASU" id="246190"/>
<dbReference type="Ensembl" id="ENSMUST00000047025.15">
    <property type="protein sequence ID" value="ENSMUSP00000044177.8"/>
    <property type="gene ID" value="ENSMUSG00000034990.16"/>
</dbReference>
<dbReference type="GeneID" id="246190"/>
<dbReference type="KEGG" id="mmu:246190"/>
<dbReference type="UCSC" id="uc009jnn.1">
    <property type="organism name" value="mouse"/>
</dbReference>
<dbReference type="AGR" id="MGI:2149209"/>
<dbReference type="CTD" id="146183"/>
<dbReference type="MGI" id="MGI:2149209">
    <property type="gene designation" value="Otoa"/>
</dbReference>
<dbReference type="VEuPathDB" id="HostDB:ENSMUSG00000034990"/>
<dbReference type="eggNOG" id="ENOG502QU5H">
    <property type="taxonomic scope" value="Eukaryota"/>
</dbReference>
<dbReference type="GeneTree" id="ENSGT00950000182957"/>
<dbReference type="HOGENOM" id="CLU_291462_0_0_1"/>
<dbReference type="InParanoid" id="Q8K561"/>
<dbReference type="OMA" id="QYFENNF"/>
<dbReference type="OrthoDB" id="8195838at2759"/>
<dbReference type="PhylomeDB" id="Q8K561"/>
<dbReference type="TreeFam" id="TF336607"/>
<dbReference type="Reactome" id="R-MMU-163125">
    <property type="pathway name" value="Post-translational modification: synthesis of GPI-anchored proteins"/>
</dbReference>
<dbReference type="BioGRID-ORCS" id="246190">
    <property type="hits" value="2 hits in 78 CRISPR screens"/>
</dbReference>
<dbReference type="ChiTaRS" id="Otoa">
    <property type="organism name" value="mouse"/>
</dbReference>
<dbReference type="PRO" id="PR:Q8K561"/>
<dbReference type="Proteomes" id="UP000000589">
    <property type="component" value="Chromosome 7"/>
</dbReference>
<dbReference type="RNAct" id="Q8K561">
    <property type="molecule type" value="protein"/>
</dbReference>
<dbReference type="Bgee" id="ENSMUSG00000034990">
    <property type="expression patterns" value="Expressed in epithelium of cochlear duct and 27 other cell types or tissues"/>
</dbReference>
<dbReference type="ExpressionAtlas" id="Q8K561">
    <property type="expression patterns" value="baseline and differential"/>
</dbReference>
<dbReference type="GO" id="GO:0016324">
    <property type="term" value="C:apical plasma membrane"/>
    <property type="evidence" value="ECO:0000314"/>
    <property type="project" value="MGI"/>
</dbReference>
<dbReference type="GO" id="GO:0005576">
    <property type="term" value="C:extracellular region"/>
    <property type="evidence" value="ECO:0007669"/>
    <property type="project" value="UniProtKB-KW"/>
</dbReference>
<dbReference type="GO" id="GO:0098552">
    <property type="term" value="C:side of membrane"/>
    <property type="evidence" value="ECO:0007669"/>
    <property type="project" value="UniProtKB-KW"/>
</dbReference>
<dbReference type="GO" id="GO:0007160">
    <property type="term" value="P:cell-matrix adhesion"/>
    <property type="evidence" value="ECO:0000315"/>
    <property type="project" value="MGI"/>
</dbReference>
<dbReference type="GO" id="GO:0035264">
    <property type="term" value="P:multicellular organism growth"/>
    <property type="evidence" value="ECO:0000315"/>
    <property type="project" value="MGI"/>
</dbReference>
<dbReference type="GO" id="GO:0007605">
    <property type="term" value="P:sensory perception of sound"/>
    <property type="evidence" value="ECO:0000315"/>
    <property type="project" value="MGI"/>
</dbReference>
<dbReference type="GO" id="GO:0019226">
    <property type="term" value="P:transmission of nerve impulse"/>
    <property type="evidence" value="ECO:0000315"/>
    <property type="project" value="MGI"/>
</dbReference>
<dbReference type="InterPro" id="IPR026664">
    <property type="entry name" value="Stereocilin-rel"/>
</dbReference>
<dbReference type="PANTHER" id="PTHR23412:SF18">
    <property type="entry name" value="OTOANCORIN"/>
    <property type="match status" value="1"/>
</dbReference>
<dbReference type="PANTHER" id="PTHR23412">
    <property type="entry name" value="STEREOCILIN RELATED"/>
    <property type="match status" value="1"/>
</dbReference>
<reference key="1">
    <citation type="journal article" date="2002" name="Proc. Natl. Acad. Sci. U.S.A.">
        <title>Otoancorin, an inner ear protein restricted to the interface between the apical surface of sensory epithelia and their overlying acellular gels, is defective in autosomal recessive deafness DFNB22.</title>
        <authorList>
            <person name="Zwaenepoel I."/>
            <person name="Mustapha M."/>
            <person name="Leibovici M."/>
            <person name="Verpy E."/>
            <person name="Goodyear R."/>
            <person name="Liu X.Z."/>
            <person name="Nouaille S."/>
            <person name="Nance W.E."/>
            <person name="Kanaan M."/>
            <person name="Avraham K.B."/>
            <person name="Tekaia F."/>
            <person name="Loiselet J."/>
            <person name="Lathrop M."/>
            <person name="Richardson G."/>
            <person name="Petit C."/>
        </authorList>
    </citation>
    <scope>NUCLEOTIDE SEQUENCE [MRNA]</scope>
    <scope>FUNCTION</scope>
    <scope>SUBCELLULAR LOCATION</scope>
    <scope>TISSUE SPECIFICITY</scope>
    <source>
        <strain>BALB/cJ</strain>
        <tissue>Inner ear vestibule</tissue>
    </source>
</reference>
<protein>
    <recommendedName>
        <fullName>Otoancorin</fullName>
    </recommendedName>
</protein>
<accession>Q8K561</accession>